<name>DOHH_LENED</name>
<feature type="chain" id="PRO_0000283668" description="Deoxyhypusine hydroxylase">
    <location>
        <begin position="1"/>
        <end position="330"/>
    </location>
</feature>
<feature type="repeat" description="HEAT-like PBS-type 1">
    <location>
        <begin position="57"/>
        <end position="83"/>
    </location>
</feature>
<feature type="repeat" description="HEAT-like PBS-type 2">
    <location>
        <begin position="90"/>
        <end position="116"/>
    </location>
</feature>
<feature type="repeat" description="HEAT-like PBS-type 3">
    <location>
        <begin position="199"/>
        <end position="225"/>
    </location>
</feature>
<feature type="repeat" description="HEAT-like PBS-type 4">
    <location>
        <begin position="263"/>
        <end position="289"/>
    </location>
</feature>
<feature type="binding site" evidence="1">
    <location>
        <position position="59"/>
    </location>
    <ligand>
        <name>Fe cation</name>
        <dbReference type="ChEBI" id="CHEBI:24875"/>
        <label>1</label>
    </ligand>
</feature>
<feature type="binding site" evidence="1">
    <location>
        <position position="60"/>
    </location>
    <ligand>
        <name>Fe cation</name>
        <dbReference type="ChEBI" id="CHEBI:24875"/>
        <label>1</label>
    </ligand>
</feature>
<feature type="binding site" evidence="1">
    <location>
        <position position="92"/>
    </location>
    <ligand>
        <name>Fe cation</name>
        <dbReference type="ChEBI" id="CHEBI:24875"/>
        <label>1</label>
    </ligand>
</feature>
<feature type="binding site" evidence="1">
    <location>
        <position position="93"/>
    </location>
    <ligand>
        <name>Fe cation</name>
        <dbReference type="ChEBI" id="CHEBI:24875"/>
        <label>1</label>
    </ligand>
</feature>
<feature type="binding site" evidence="1">
    <location>
        <position position="232"/>
    </location>
    <ligand>
        <name>Fe cation</name>
        <dbReference type="ChEBI" id="CHEBI:24875"/>
        <label>2</label>
    </ligand>
</feature>
<feature type="binding site" evidence="1">
    <location>
        <position position="233"/>
    </location>
    <ligand>
        <name>Fe cation</name>
        <dbReference type="ChEBI" id="CHEBI:24875"/>
        <label>2</label>
    </ligand>
</feature>
<feature type="binding site" evidence="1">
    <location>
        <position position="265"/>
    </location>
    <ligand>
        <name>Fe cation</name>
        <dbReference type="ChEBI" id="CHEBI:24875"/>
        <label>2</label>
    </ligand>
</feature>
<feature type="binding site" evidence="1">
    <location>
        <position position="266"/>
    </location>
    <ligand>
        <name>Fe cation</name>
        <dbReference type="ChEBI" id="CHEBI:24875"/>
        <label>2</label>
    </ligand>
</feature>
<gene>
    <name evidence="1" type="primary">LIA1</name>
    <name type="synonym">mfbC</name>
</gene>
<comment type="function">
    <text evidence="1">Catalyzes the hydroxylation of the N(6)-(4-aminobutyl)-L-lysine intermediate to form hypusine, an essential post-translational modification only found in mature eIF-5A factor.</text>
</comment>
<comment type="catalytic activity">
    <reaction evidence="1">
        <text>[eIF5A protein]-deoxyhypusine + AH2 + O2 = [eIF5A protein]-hypusine + A + H2O</text>
        <dbReference type="Rhea" id="RHEA:14101"/>
        <dbReference type="Rhea" id="RHEA-COMP:10144"/>
        <dbReference type="Rhea" id="RHEA-COMP:12592"/>
        <dbReference type="ChEBI" id="CHEBI:13193"/>
        <dbReference type="ChEBI" id="CHEBI:15377"/>
        <dbReference type="ChEBI" id="CHEBI:15379"/>
        <dbReference type="ChEBI" id="CHEBI:17499"/>
        <dbReference type="ChEBI" id="CHEBI:82657"/>
        <dbReference type="ChEBI" id="CHEBI:91175"/>
        <dbReference type="EC" id="1.14.99.29"/>
    </reaction>
</comment>
<comment type="cofactor">
    <cofactor evidence="1">
        <name>Fe(2+)</name>
        <dbReference type="ChEBI" id="CHEBI:29033"/>
    </cofactor>
    <text evidence="1">Binds 2 Fe(2+) ions per subunit.</text>
</comment>
<comment type="pathway">
    <text evidence="1">Protein modification; eIF5A hypusination.</text>
</comment>
<comment type="subcellular location">
    <subcellularLocation>
        <location evidence="1">Cytoplasm</location>
    </subcellularLocation>
    <subcellularLocation>
        <location evidence="1">Nucleus</location>
    </subcellularLocation>
</comment>
<comment type="similarity">
    <text evidence="1">Belongs to the deoxyhypusine hydroxylase family.</text>
</comment>
<proteinExistence type="evidence at transcript level"/>
<reference key="1">
    <citation type="journal article" date="2004" name="Biosci. Biotechnol. Biochem.">
        <title>Target genes of the developmental regulator PRIB of the mushroom Lentinula edodes.</title>
        <authorList>
            <person name="Miyazaki Y."/>
            <person name="Sakuragi T."/>
            <person name="Yamazaki T."/>
            <person name="Shishido K."/>
        </authorList>
    </citation>
    <scope>NUCLEOTIDE SEQUENCE [MRNA]</scope>
</reference>
<sequence>MSLSATQLKALEDSVLNTSGKVLLHDRVRALFTLKSLKNEDAIRIISKGFQDSAALLKHELAYCLGQIRNPLALPVLESVLRNPSEDPMVRHEAAEAMGAISTADSIPILKQYLSDPDRSVRETCEIAIAKIEWDKTEEGAKNDKATRDENRLPLYTSIDPAPATSGLLTGAPRPEEISQTKIDELRDNLLDVNRPLFERYRAMFALRNIGSPAAVDALAAGFSGDSALFKHEIAFVFGQLLSPHSVPCLIEVLQNSPESDMVRHEAAEALGGIATPEVLPPLKEWVARDDAPVVVRESCQVALDLWEYENSGDFQYANGLESPSTPISV</sequence>
<dbReference type="EC" id="1.14.99.29" evidence="1"/>
<dbReference type="EMBL" id="AB067692">
    <property type="protein sequence ID" value="BAB62528.1"/>
    <property type="molecule type" value="mRNA"/>
</dbReference>
<dbReference type="SMR" id="Q96WP5"/>
<dbReference type="UniPathway" id="UPA00354"/>
<dbReference type="GO" id="GO:0005737">
    <property type="term" value="C:cytoplasm"/>
    <property type="evidence" value="ECO:0007669"/>
    <property type="project" value="UniProtKB-SubCell"/>
</dbReference>
<dbReference type="GO" id="GO:0005634">
    <property type="term" value="C:nucleus"/>
    <property type="evidence" value="ECO:0007669"/>
    <property type="project" value="UniProtKB-SubCell"/>
</dbReference>
<dbReference type="GO" id="GO:0019135">
    <property type="term" value="F:deoxyhypusine monooxygenase activity"/>
    <property type="evidence" value="ECO:0007669"/>
    <property type="project" value="UniProtKB-UniRule"/>
</dbReference>
<dbReference type="GO" id="GO:0046872">
    <property type="term" value="F:metal ion binding"/>
    <property type="evidence" value="ECO:0007669"/>
    <property type="project" value="UniProtKB-KW"/>
</dbReference>
<dbReference type="Gene3D" id="1.25.10.10">
    <property type="entry name" value="Leucine-rich Repeat Variant"/>
    <property type="match status" value="2"/>
</dbReference>
<dbReference type="HAMAP" id="MF_03101">
    <property type="entry name" value="Deoxyhypusine_hydroxylase"/>
    <property type="match status" value="1"/>
</dbReference>
<dbReference type="InterPro" id="IPR011989">
    <property type="entry name" value="ARM-like"/>
</dbReference>
<dbReference type="InterPro" id="IPR016024">
    <property type="entry name" value="ARM-type_fold"/>
</dbReference>
<dbReference type="InterPro" id="IPR027517">
    <property type="entry name" value="Deoxyhypusine_hydroxylase"/>
</dbReference>
<dbReference type="InterPro" id="IPR021133">
    <property type="entry name" value="HEAT_type_2"/>
</dbReference>
<dbReference type="InterPro" id="IPR004155">
    <property type="entry name" value="PBS_lyase_HEAT"/>
</dbReference>
<dbReference type="PANTHER" id="PTHR12697:SF5">
    <property type="entry name" value="DEOXYHYPUSINE HYDROXYLASE"/>
    <property type="match status" value="1"/>
</dbReference>
<dbReference type="PANTHER" id="PTHR12697">
    <property type="entry name" value="PBS LYASE HEAT-LIKE PROTEIN"/>
    <property type="match status" value="1"/>
</dbReference>
<dbReference type="Pfam" id="PF13646">
    <property type="entry name" value="HEAT_2"/>
    <property type="match status" value="2"/>
</dbReference>
<dbReference type="SMART" id="SM00567">
    <property type="entry name" value="EZ_HEAT"/>
    <property type="match status" value="6"/>
</dbReference>
<dbReference type="SUPFAM" id="SSF48371">
    <property type="entry name" value="ARM repeat"/>
    <property type="match status" value="1"/>
</dbReference>
<dbReference type="PROSITE" id="PS50077">
    <property type="entry name" value="HEAT_REPEAT"/>
    <property type="match status" value="1"/>
</dbReference>
<protein>
    <recommendedName>
        <fullName evidence="1">Deoxyhypusine hydroxylase</fullName>
        <shortName evidence="1">DOHH</shortName>
        <ecNumber evidence="1">1.14.99.29</ecNumber>
    </recommendedName>
    <alternativeName>
        <fullName evidence="1">Deoxyhypusine dioxygenase</fullName>
    </alternativeName>
    <alternativeName>
        <fullName evidence="1">Deoxyhypusine monooxygenase</fullName>
    </alternativeName>
</protein>
<organism>
    <name type="scientific">Lentinula edodes</name>
    <name type="common">Shiitake mushroom</name>
    <name type="synonym">Lentinus edodes</name>
    <dbReference type="NCBI Taxonomy" id="5353"/>
    <lineage>
        <taxon>Eukaryota</taxon>
        <taxon>Fungi</taxon>
        <taxon>Dikarya</taxon>
        <taxon>Basidiomycota</taxon>
        <taxon>Agaricomycotina</taxon>
        <taxon>Agaricomycetes</taxon>
        <taxon>Agaricomycetidae</taxon>
        <taxon>Agaricales</taxon>
        <taxon>Marasmiineae</taxon>
        <taxon>Omphalotaceae</taxon>
        <taxon>Lentinula</taxon>
    </lineage>
</organism>
<evidence type="ECO:0000255" key="1">
    <source>
        <dbReference type="HAMAP-Rule" id="MF_03101"/>
    </source>
</evidence>
<accession>Q96WP5</accession>
<keyword id="KW-0963">Cytoplasm</keyword>
<keyword id="KW-0386">Hypusine biosynthesis</keyword>
<keyword id="KW-0408">Iron</keyword>
<keyword id="KW-0479">Metal-binding</keyword>
<keyword id="KW-0503">Monooxygenase</keyword>
<keyword id="KW-0539">Nucleus</keyword>
<keyword id="KW-0560">Oxidoreductase</keyword>
<keyword id="KW-0677">Repeat</keyword>